<sequence length="324" mass="35738">MITSNRKPIVPDFMRPVAELEGQVEELKKLAPKNDIIINNKIARFQNQLVKLQKEIFSSLTPLQRLHLVRQSERPTTLDYIPGILDEWIELHGDRGGADDPALVGGIGKINGRNIVFIGHQRGRGTKENVARNFGMPAPGGYRKALRLMKHANRFGMPILTFIDTPGAWAGLKAEELGQGEAIAVNLREMFSFEVPIVCTIIGEGGSGGALGIGIGDSILMLEYAIYTVATPEACAAILWKNSKESLAAAEALKITSHDLKVLGIVDEILQEPLGGAQADPYTASQYLKKELTEQLDSLSKLDSQTLKKRRYEKFRRMGAFYEI</sequence>
<comment type="function">
    <text evidence="2">Component of the acetyl coenzyme A carboxylase (ACC) complex. First, biotin carboxylase catalyzes the carboxylation of biotin on its carrier protein (BCCP) and then the CO(2) group is transferred by the carboxyltransferase to acetyl-CoA to form malonyl-CoA.</text>
</comment>
<comment type="catalytic activity">
    <reaction evidence="2">
        <text>N(6)-carboxybiotinyl-L-lysyl-[protein] + acetyl-CoA = N(6)-biotinyl-L-lysyl-[protein] + malonyl-CoA</text>
        <dbReference type="Rhea" id="RHEA:54728"/>
        <dbReference type="Rhea" id="RHEA-COMP:10505"/>
        <dbReference type="Rhea" id="RHEA-COMP:10506"/>
        <dbReference type="ChEBI" id="CHEBI:57288"/>
        <dbReference type="ChEBI" id="CHEBI:57384"/>
        <dbReference type="ChEBI" id="CHEBI:83144"/>
        <dbReference type="ChEBI" id="CHEBI:83145"/>
        <dbReference type="EC" id="2.1.3.15"/>
    </reaction>
</comment>
<comment type="pathway">
    <text evidence="2">Lipid metabolism; malonyl-CoA biosynthesis; malonyl-CoA from acetyl-CoA: step 1/1.</text>
</comment>
<comment type="subunit">
    <text evidence="1">Acetyl-CoA carboxylase is a heterohexamer composed of biotin carboxyl carrier protein (accB), biotin carboxylase (accC) and two subunits each of ACCase subunit alpha (accA) and ACCase subunit beta (accD).</text>
</comment>
<comment type="subcellular location">
    <subcellularLocation>
        <location>Plastid</location>
        <location>Chloroplast</location>
    </subcellularLocation>
</comment>
<comment type="similarity">
    <text evidence="2">Belongs to the AccA family.</text>
</comment>
<gene>
    <name evidence="2" type="primary">accA</name>
</gene>
<feature type="chain" id="PRO_0000275159" description="Acetyl-coenzyme A carboxylase carboxyl transferase subunit alpha">
    <location>
        <begin position="1"/>
        <end position="324"/>
    </location>
</feature>
<feature type="domain" description="CoA carboxyltransferase C-terminal" evidence="3">
    <location>
        <begin position="44"/>
        <end position="298"/>
    </location>
</feature>
<accession>Q1XDB6</accession>
<organism>
    <name type="scientific">Pyropia yezoensis</name>
    <name type="common">Susabi-nori</name>
    <name type="synonym">Porphyra yezoensis</name>
    <dbReference type="NCBI Taxonomy" id="2788"/>
    <lineage>
        <taxon>Eukaryota</taxon>
        <taxon>Rhodophyta</taxon>
        <taxon>Bangiophyceae</taxon>
        <taxon>Bangiales</taxon>
        <taxon>Bangiaceae</taxon>
        <taxon>Pyropia</taxon>
    </lineage>
</organism>
<keyword id="KW-0067">ATP-binding</keyword>
<keyword id="KW-0150">Chloroplast</keyword>
<keyword id="KW-0275">Fatty acid biosynthesis</keyword>
<keyword id="KW-0276">Fatty acid metabolism</keyword>
<keyword id="KW-0444">Lipid biosynthesis</keyword>
<keyword id="KW-0443">Lipid metabolism</keyword>
<keyword id="KW-0547">Nucleotide-binding</keyword>
<keyword id="KW-0934">Plastid</keyword>
<keyword id="KW-0808">Transferase</keyword>
<reference key="1">
    <citation type="submission" date="2003-11" db="EMBL/GenBank/DDBJ databases">
        <title>Whole genome sequence of Porphyra yezoensis chloroplast.</title>
        <authorList>
            <person name="Kunimoto M."/>
            <person name="Morishima K."/>
            <person name="Yoshikawa M."/>
            <person name="Fukuda S."/>
            <person name="Kobayashi T."/>
            <person name="Kobayashi M."/>
            <person name="Okazaki T."/>
            <person name="Ohara I."/>
            <person name="Nakayama I."/>
        </authorList>
    </citation>
    <scope>NUCLEOTIDE SEQUENCE [LARGE SCALE GENOMIC DNA]</scope>
    <source>
        <strain>U-51</strain>
    </source>
</reference>
<dbReference type="EC" id="2.1.3.15" evidence="2"/>
<dbReference type="EMBL" id="AP006715">
    <property type="protein sequence ID" value="BAE92495.1"/>
    <property type="molecule type" value="Genomic_DNA"/>
</dbReference>
<dbReference type="RefSeq" id="YP_537052.1">
    <property type="nucleotide sequence ID" value="NC_007932.1"/>
</dbReference>
<dbReference type="SMR" id="Q1XDB6"/>
<dbReference type="GeneID" id="3978959"/>
<dbReference type="UniPathway" id="UPA00655">
    <property type="reaction ID" value="UER00711"/>
</dbReference>
<dbReference type="GO" id="GO:0009317">
    <property type="term" value="C:acetyl-CoA carboxylase complex"/>
    <property type="evidence" value="ECO:0007669"/>
    <property type="project" value="InterPro"/>
</dbReference>
<dbReference type="GO" id="GO:0009507">
    <property type="term" value="C:chloroplast"/>
    <property type="evidence" value="ECO:0007669"/>
    <property type="project" value="UniProtKB-SubCell"/>
</dbReference>
<dbReference type="GO" id="GO:0003989">
    <property type="term" value="F:acetyl-CoA carboxylase activity"/>
    <property type="evidence" value="ECO:0007669"/>
    <property type="project" value="InterPro"/>
</dbReference>
<dbReference type="GO" id="GO:0005524">
    <property type="term" value="F:ATP binding"/>
    <property type="evidence" value="ECO:0007669"/>
    <property type="project" value="UniProtKB-KW"/>
</dbReference>
<dbReference type="GO" id="GO:0016743">
    <property type="term" value="F:carboxyl- or carbamoyltransferase activity"/>
    <property type="evidence" value="ECO:0007669"/>
    <property type="project" value="UniProtKB-UniRule"/>
</dbReference>
<dbReference type="GO" id="GO:0006633">
    <property type="term" value="P:fatty acid biosynthetic process"/>
    <property type="evidence" value="ECO:0007669"/>
    <property type="project" value="UniProtKB-KW"/>
</dbReference>
<dbReference type="GO" id="GO:2001295">
    <property type="term" value="P:malonyl-CoA biosynthetic process"/>
    <property type="evidence" value="ECO:0007669"/>
    <property type="project" value="UniProtKB-UniRule"/>
</dbReference>
<dbReference type="Gene3D" id="3.90.226.10">
    <property type="entry name" value="2-enoyl-CoA Hydratase, Chain A, domain 1"/>
    <property type="match status" value="1"/>
</dbReference>
<dbReference type="HAMAP" id="MF_00823">
    <property type="entry name" value="AcetylCoA_CT_alpha"/>
    <property type="match status" value="1"/>
</dbReference>
<dbReference type="InterPro" id="IPR001095">
    <property type="entry name" value="Acetyl_CoA_COase_a_su"/>
</dbReference>
<dbReference type="InterPro" id="IPR029045">
    <property type="entry name" value="ClpP/crotonase-like_dom_sf"/>
</dbReference>
<dbReference type="InterPro" id="IPR011763">
    <property type="entry name" value="COA_CT_C"/>
</dbReference>
<dbReference type="NCBIfam" id="TIGR00513">
    <property type="entry name" value="accA"/>
    <property type="match status" value="1"/>
</dbReference>
<dbReference type="NCBIfam" id="NF041504">
    <property type="entry name" value="AccA_sub"/>
    <property type="match status" value="1"/>
</dbReference>
<dbReference type="NCBIfam" id="NF004344">
    <property type="entry name" value="PRK05724.1"/>
    <property type="match status" value="1"/>
</dbReference>
<dbReference type="PANTHER" id="PTHR42853">
    <property type="entry name" value="ACETYL-COENZYME A CARBOXYLASE CARBOXYL TRANSFERASE SUBUNIT ALPHA"/>
    <property type="match status" value="1"/>
</dbReference>
<dbReference type="PANTHER" id="PTHR42853:SF3">
    <property type="entry name" value="ACETYL-COENZYME A CARBOXYLASE CARBOXYL TRANSFERASE SUBUNIT ALPHA, CHLOROPLASTIC"/>
    <property type="match status" value="1"/>
</dbReference>
<dbReference type="Pfam" id="PF03255">
    <property type="entry name" value="ACCA"/>
    <property type="match status" value="1"/>
</dbReference>
<dbReference type="PRINTS" id="PR01069">
    <property type="entry name" value="ACCCTRFRASEA"/>
</dbReference>
<dbReference type="SUPFAM" id="SSF52096">
    <property type="entry name" value="ClpP/crotonase"/>
    <property type="match status" value="1"/>
</dbReference>
<dbReference type="PROSITE" id="PS50989">
    <property type="entry name" value="COA_CT_CTER"/>
    <property type="match status" value="1"/>
</dbReference>
<name>ACCA_PYRYE</name>
<protein>
    <recommendedName>
        <fullName evidence="2">Acetyl-coenzyme A carboxylase carboxyl transferase subunit alpha</fullName>
        <shortName evidence="2">ACCase subunit alpha</shortName>
        <shortName evidence="2">Acetyl-CoA carboxylase carboxyltransferase subunit alpha</shortName>
        <ecNumber evidence="2">2.1.3.15</ecNumber>
    </recommendedName>
</protein>
<proteinExistence type="inferred from homology"/>
<geneLocation type="chloroplast"/>
<evidence type="ECO:0000250" key="1"/>
<evidence type="ECO:0000255" key="2">
    <source>
        <dbReference type="HAMAP-Rule" id="MF_00823"/>
    </source>
</evidence>
<evidence type="ECO:0000255" key="3">
    <source>
        <dbReference type="PROSITE-ProRule" id="PRU01137"/>
    </source>
</evidence>